<dbReference type="EMBL" id="CP001399">
    <property type="protein sequence ID" value="ACP35286.1"/>
    <property type="molecule type" value="Genomic_DNA"/>
</dbReference>
<dbReference type="RefSeq" id="WP_012713614.1">
    <property type="nucleotide sequence ID" value="NC_012589.1"/>
</dbReference>
<dbReference type="SMR" id="C3MPH3"/>
<dbReference type="GeneID" id="15297555"/>
<dbReference type="KEGG" id="sis:LS215_1276"/>
<dbReference type="HOGENOM" id="CLU_134829_1_0_2"/>
<dbReference type="OrthoDB" id="7819at2157"/>
<dbReference type="Proteomes" id="UP000001747">
    <property type="component" value="Chromosome"/>
</dbReference>
<dbReference type="Gene3D" id="3.30.1440.10">
    <property type="match status" value="1"/>
</dbReference>
<dbReference type="HAMAP" id="MF_01112">
    <property type="entry name" value="UPF0201"/>
    <property type="match status" value="1"/>
</dbReference>
<dbReference type="InterPro" id="IPR002739">
    <property type="entry name" value="PAB1135-like"/>
</dbReference>
<dbReference type="InterPro" id="IPR022803">
    <property type="entry name" value="Ribosomal_uL5_dom_sf"/>
</dbReference>
<dbReference type="NCBIfam" id="NF001687">
    <property type="entry name" value="PRK00447.1"/>
    <property type="match status" value="1"/>
</dbReference>
<dbReference type="PANTHER" id="PTHR39652">
    <property type="entry name" value="UPF0201 PROTEIN TK1335"/>
    <property type="match status" value="1"/>
</dbReference>
<dbReference type="PANTHER" id="PTHR39652:SF1">
    <property type="entry name" value="UPF0201 PROTEIN TK1335"/>
    <property type="match status" value="1"/>
</dbReference>
<dbReference type="Pfam" id="PF01877">
    <property type="entry name" value="RNA_binding"/>
    <property type="match status" value="1"/>
</dbReference>
<dbReference type="SUPFAM" id="SSF55282">
    <property type="entry name" value="RL5-like"/>
    <property type="match status" value="1"/>
</dbReference>
<comment type="similarity">
    <text evidence="1">Belongs to the UPF0201 family.</text>
</comment>
<accession>C3MPH3</accession>
<reference key="1">
    <citation type="journal article" date="2009" name="Proc. Natl. Acad. Sci. U.S.A.">
        <title>Biogeography of the Sulfolobus islandicus pan-genome.</title>
        <authorList>
            <person name="Reno M.L."/>
            <person name="Held N.L."/>
            <person name="Fields C.J."/>
            <person name="Burke P.V."/>
            <person name="Whitaker R.J."/>
        </authorList>
    </citation>
    <scope>NUCLEOTIDE SEQUENCE [LARGE SCALE GENOMIC DNA]</scope>
    <source>
        <strain>L.S.2.15 / Lassen #1</strain>
    </source>
</reference>
<feature type="chain" id="PRO_1000213585" description="UPF0201 protein LS215_1276">
    <location>
        <begin position="1"/>
        <end position="145"/>
    </location>
</feature>
<organism>
    <name type="scientific">Saccharolobus islandicus (strain L.S.2.15 / Lassen #1)</name>
    <name type="common">Sulfolobus islandicus</name>
    <dbReference type="NCBI Taxonomy" id="429572"/>
    <lineage>
        <taxon>Archaea</taxon>
        <taxon>Thermoproteota</taxon>
        <taxon>Thermoprotei</taxon>
        <taxon>Sulfolobales</taxon>
        <taxon>Sulfolobaceae</taxon>
        <taxon>Saccharolobus</taxon>
    </lineage>
</organism>
<proteinExistence type="inferred from homology"/>
<evidence type="ECO:0000255" key="1">
    <source>
        <dbReference type="HAMAP-Rule" id="MF_01112"/>
    </source>
</evidence>
<name>Y1276_SACI2</name>
<gene>
    <name type="ordered locus">LS215_1276</name>
</gene>
<sequence>MVKVMVVAEVRPSEDVNKVLSAISNFFDFEKTNTRKEGIIDILVLEARTLKSLLKFHRVLRNERILDSARKYLMKGIEGNTIAFMIHKQAAAVGVLSFVDSDKESPLGAIKFYIEYQNPKEVVDWLAPRTAHGVPLWDNPIPPDV</sequence>
<protein>
    <recommendedName>
        <fullName evidence="1">UPF0201 protein LS215_1276</fullName>
    </recommendedName>
</protein>